<comment type="similarity">
    <text evidence="2">Belongs to the class IV-like SAM-binding methyltransferase superfamily. RNA methyltransferase TrmH family.</text>
</comment>
<feature type="chain" id="PRO_0000224826" description="Putative TrmH family tRNA/rRNA methyltransferase">
    <location>
        <begin position="1"/>
        <end position="248"/>
    </location>
</feature>
<feature type="binding site" evidence="1">
    <location>
        <position position="196"/>
    </location>
    <ligand>
        <name>S-adenosyl-L-methionine</name>
        <dbReference type="ChEBI" id="CHEBI:59789"/>
    </ligand>
</feature>
<feature type="binding site" evidence="1">
    <location>
        <position position="216"/>
    </location>
    <ligand>
        <name>S-adenosyl-L-methionine</name>
        <dbReference type="ChEBI" id="CHEBI:59789"/>
    </ligand>
</feature>
<feature type="binding site" evidence="1">
    <location>
        <position position="225"/>
    </location>
    <ligand>
        <name>S-adenosyl-L-methionine</name>
        <dbReference type="ChEBI" id="CHEBI:59789"/>
    </ligand>
</feature>
<accession>Q6GJD7</accession>
<gene>
    <name type="ordered locus">SAR0535</name>
</gene>
<proteinExistence type="inferred from homology"/>
<protein>
    <recommendedName>
        <fullName>Putative TrmH family tRNA/rRNA methyltransferase</fullName>
        <ecNumber>2.1.1.-</ecNumber>
    </recommendedName>
</protein>
<evidence type="ECO:0000250" key="1"/>
<evidence type="ECO:0000305" key="2"/>
<sequence length="248" mass="27181">MEDTVIVGRHAVREAIITGHPINKILIQEGIKKQQINEILKNAKDQKIIVQTVPKSKLDFLANAPHQGVAALIAPYEYADFDQFLKQQKEKEGLSTVLILDGLEDPHNLGSILRTADATGVDGVIIPKRRSVTLTQTVAKASTGAIEHVPVIRVTNLAKTIDELKDNGFWVAGTEANNATDYRNLEADMSLAIVIGSEGQGMSRLVSDKCDFYIKIPMVGHVNSLNASVAASLMMYEVFRKRHDVGEI</sequence>
<keyword id="KW-0489">Methyltransferase</keyword>
<keyword id="KW-0808">Transferase</keyword>
<dbReference type="EC" id="2.1.1.-"/>
<dbReference type="EMBL" id="BX571856">
    <property type="protein sequence ID" value="CAG39557.1"/>
    <property type="molecule type" value="Genomic_DNA"/>
</dbReference>
<dbReference type="SMR" id="Q6GJD7"/>
<dbReference type="KEGG" id="sar:SAR0535"/>
<dbReference type="HOGENOM" id="CLU_021322_0_1_9"/>
<dbReference type="Proteomes" id="UP000000596">
    <property type="component" value="Chromosome"/>
</dbReference>
<dbReference type="GO" id="GO:0005829">
    <property type="term" value="C:cytosol"/>
    <property type="evidence" value="ECO:0007669"/>
    <property type="project" value="TreeGrafter"/>
</dbReference>
<dbReference type="GO" id="GO:0003723">
    <property type="term" value="F:RNA binding"/>
    <property type="evidence" value="ECO:0007669"/>
    <property type="project" value="InterPro"/>
</dbReference>
<dbReference type="GO" id="GO:0008173">
    <property type="term" value="F:RNA methyltransferase activity"/>
    <property type="evidence" value="ECO:0007669"/>
    <property type="project" value="InterPro"/>
</dbReference>
<dbReference type="GO" id="GO:0032259">
    <property type="term" value="P:methylation"/>
    <property type="evidence" value="ECO:0007669"/>
    <property type="project" value="UniProtKB-KW"/>
</dbReference>
<dbReference type="GO" id="GO:0006396">
    <property type="term" value="P:RNA processing"/>
    <property type="evidence" value="ECO:0007669"/>
    <property type="project" value="InterPro"/>
</dbReference>
<dbReference type="CDD" id="cd18103">
    <property type="entry name" value="SpoU-like_RlmB"/>
    <property type="match status" value="1"/>
</dbReference>
<dbReference type="FunFam" id="3.40.1280.10:FF:000008">
    <property type="entry name" value="Group 3 RNA methyltransferase TrmH"/>
    <property type="match status" value="1"/>
</dbReference>
<dbReference type="Gene3D" id="3.30.1330.30">
    <property type="match status" value="1"/>
</dbReference>
<dbReference type="Gene3D" id="3.40.1280.10">
    <property type="match status" value="1"/>
</dbReference>
<dbReference type="InterPro" id="IPR029028">
    <property type="entry name" value="Alpha/beta_knot_MTases"/>
</dbReference>
<dbReference type="InterPro" id="IPR029064">
    <property type="entry name" value="Ribosomal_eL30-like_sf"/>
</dbReference>
<dbReference type="InterPro" id="IPR004441">
    <property type="entry name" value="rRNA_MeTrfase_TrmH"/>
</dbReference>
<dbReference type="InterPro" id="IPR001537">
    <property type="entry name" value="SpoU_MeTrfase"/>
</dbReference>
<dbReference type="InterPro" id="IPR013123">
    <property type="entry name" value="SpoU_subst-bd"/>
</dbReference>
<dbReference type="InterPro" id="IPR029026">
    <property type="entry name" value="tRNA_m1G_MTases_N"/>
</dbReference>
<dbReference type="NCBIfam" id="TIGR00186">
    <property type="entry name" value="rRNA_methyl_3"/>
    <property type="match status" value="1"/>
</dbReference>
<dbReference type="PANTHER" id="PTHR46429">
    <property type="entry name" value="23S RRNA (GUANOSINE-2'-O-)-METHYLTRANSFERASE RLMB"/>
    <property type="match status" value="1"/>
</dbReference>
<dbReference type="PANTHER" id="PTHR46429:SF1">
    <property type="entry name" value="23S RRNA (GUANOSINE-2'-O-)-METHYLTRANSFERASE RLMB"/>
    <property type="match status" value="1"/>
</dbReference>
<dbReference type="Pfam" id="PF00588">
    <property type="entry name" value="SpoU_methylase"/>
    <property type="match status" value="1"/>
</dbReference>
<dbReference type="Pfam" id="PF08032">
    <property type="entry name" value="SpoU_sub_bind"/>
    <property type="match status" value="1"/>
</dbReference>
<dbReference type="SMART" id="SM00967">
    <property type="entry name" value="SpoU_sub_bind"/>
    <property type="match status" value="1"/>
</dbReference>
<dbReference type="SUPFAM" id="SSF75217">
    <property type="entry name" value="alpha/beta knot"/>
    <property type="match status" value="1"/>
</dbReference>
<dbReference type="SUPFAM" id="SSF55315">
    <property type="entry name" value="L30e-like"/>
    <property type="match status" value="1"/>
</dbReference>
<organism>
    <name type="scientific">Staphylococcus aureus (strain MRSA252)</name>
    <dbReference type="NCBI Taxonomy" id="282458"/>
    <lineage>
        <taxon>Bacteria</taxon>
        <taxon>Bacillati</taxon>
        <taxon>Bacillota</taxon>
        <taxon>Bacilli</taxon>
        <taxon>Bacillales</taxon>
        <taxon>Staphylococcaceae</taxon>
        <taxon>Staphylococcus</taxon>
    </lineage>
</organism>
<reference key="1">
    <citation type="journal article" date="2004" name="Proc. Natl. Acad. Sci. U.S.A.">
        <title>Complete genomes of two clinical Staphylococcus aureus strains: evidence for the rapid evolution of virulence and drug resistance.</title>
        <authorList>
            <person name="Holden M.T.G."/>
            <person name="Feil E.J."/>
            <person name="Lindsay J.A."/>
            <person name="Peacock S.J."/>
            <person name="Day N.P.J."/>
            <person name="Enright M.C."/>
            <person name="Foster T.J."/>
            <person name="Moore C.E."/>
            <person name="Hurst L."/>
            <person name="Atkin R."/>
            <person name="Barron A."/>
            <person name="Bason N."/>
            <person name="Bentley S.D."/>
            <person name="Chillingworth C."/>
            <person name="Chillingworth T."/>
            <person name="Churcher C."/>
            <person name="Clark L."/>
            <person name="Corton C."/>
            <person name="Cronin A."/>
            <person name="Doggett J."/>
            <person name="Dowd L."/>
            <person name="Feltwell T."/>
            <person name="Hance Z."/>
            <person name="Harris B."/>
            <person name="Hauser H."/>
            <person name="Holroyd S."/>
            <person name="Jagels K."/>
            <person name="James K.D."/>
            <person name="Lennard N."/>
            <person name="Line A."/>
            <person name="Mayes R."/>
            <person name="Moule S."/>
            <person name="Mungall K."/>
            <person name="Ormond D."/>
            <person name="Quail M.A."/>
            <person name="Rabbinowitsch E."/>
            <person name="Rutherford K.M."/>
            <person name="Sanders M."/>
            <person name="Sharp S."/>
            <person name="Simmonds M."/>
            <person name="Stevens K."/>
            <person name="Whitehead S."/>
            <person name="Barrell B.G."/>
            <person name="Spratt B.G."/>
            <person name="Parkhill J."/>
        </authorList>
    </citation>
    <scope>NUCLEOTIDE SEQUENCE [LARGE SCALE GENOMIC DNA]</scope>
    <source>
        <strain>MRSA252</strain>
    </source>
</reference>
<name>TRMHL_STAAR</name>